<evidence type="ECO:0000250" key="1"/>
<evidence type="ECO:0000255" key="2"/>
<evidence type="ECO:0000256" key="3">
    <source>
        <dbReference type="SAM" id="MobiDB-lite"/>
    </source>
</evidence>
<evidence type="ECO:0000269" key="4">
    <source>
    </source>
</evidence>
<evidence type="ECO:0000269" key="5">
    <source>
    </source>
</evidence>
<evidence type="ECO:0000269" key="6">
    <source>
    </source>
</evidence>
<evidence type="ECO:0000269" key="7">
    <source>
    </source>
</evidence>
<evidence type="ECO:0000305" key="8"/>
<name>CRD1_CHLRE</name>
<organism>
    <name type="scientific">Chlamydomonas reinhardtii</name>
    <name type="common">Chlamydomonas smithii</name>
    <dbReference type="NCBI Taxonomy" id="3055"/>
    <lineage>
        <taxon>Eukaryota</taxon>
        <taxon>Viridiplantae</taxon>
        <taxon>Chlorophyta</taxon>
        <taxon>core chlorophytes</taxon>
        <taxon>Chlorophyceae</taxon>
        <taxon>CS clade</taxon>
        <taxon>Chlamydomonadales</taxon>
        <taxon>Chlamydomonadaceae</taxon>
        <taxon>Chlamydomonas</taxon>
    </lineage>
</organism>
<gene>
    <name type="primary">CRD1</name>
</gene>
<feature type="transit peptide" description="Chloroplast" evidence="2">
    <location>
        <begin position="1"/>
        <end status="unknown"/>
    </location>
</feature>
<feature type="chain" id="PRO_0000000599" description="Magnesium-protoporphyrin IX monomethyl ester [oxidative] cyclase 1, chloroplastic">
    <location>
        <begin status="unknown"/>
        <end position="407"/>
    </location>
</feature>
<feature type="region of interest" description="Disordered" evidence="3">
    <location>
        <begin position="1"/>
        <end position="28"/>
    </location>
</feature>
<feature type="compositionally biased region" description="Polar residues" evidence="3">
    <location>
        <begin position="1"/>
        <end position="10"/>
    </location>
</feature>
<keyword id="KW-0149">Chlorophyll biosynthesis</keyword>
<keyword id="KW-0150">Chloroplast</keyword>
<keyword id="KW-0408">Iron</keyword>
<keyword id="KW-0472">Membrane</keyword>
<keyword id="KW-0479">Metal-binding</keyword>
<keyword id="KW-0521">NADP</keyword>
<keyword id="KW-0560">Oxidoreductase</keyword>
<keyword id="KW-0602">Photosynthesis</keyword>
<keyword id="KW-0934">Plastid</keyword>
<keyword id="KW-0793">Thylakoid</keyword>
<keyword id="KW-0809">Transit peptide</keyword>
<protein>
    <recommendedName>
        <fullName>Magnesium-protoporphyrin IX monomethyl ester [oxidative] cyclase 1, chloroplastic</fullName>
        <shortName>Mg-protoporphyrin IX monomethyl ester oxidative cyclase 1</shortName>
        <ecNumber>1.14.13.81</ecNumber>
    </recommendedName>
    <alternativeName>
        <fullName>Copper response defect 1 protein</fullName>
    </alternativeName>
    <alternativeName>
        <fullName>Copper-response target 1 protein</fullName>
    </alternativeName>
</protein>
<dbReference type="EC" id="1.14.13.81"/>
<dbReference type="EMBL" id="AF226628">
    <property type="protein sequence ID" value="AAF65221.1"/>
    <property type="molecule type" value="Genomic_DNA"/>
</dbReference>
<dbReference type="EMBL" id="AF237671">
    <property type="protein sequence ID" value="AAF63477.1"/>
    <property type="molecule type" value="mRNA"/>
</dbReference>
<dbReference type="RefSeq" id="XP_001692557.1">
    <property type="nucleotide sequence ID" value="XM_001692505.1"/>
</dbReference>
<dbReference type="SMR" id="Q9LD46"/>
<dbReference type="PaxDb" id="3055-EDP04035"/>
<dbReference type="DNASU" id="5718021"/>
<dbReference type="EnsemblPlants" id="PNW81190">
    <property type="protein sequence ID" value="PNW81190"/>
    <property type="gene ID" value="CHLRE_07g346050v5"/>
</dbReference>
<dbReference type="EnsemblPlants" id="PNW81191">
    <property type="protein sequence ID" value="PNW81191"/>
    <property type="gene ID" value="CHLRE_07g346050v5"/>
</dbReference>
<dbReference type="Gramene" id="PNW81190">
    <property type="protein sequence ID" value="PNW81190"/>
    <property type="gene ID" value="CHLRE_07g346050v5"/>
</dbReference>
<dbReference type="Gramene" id="PNW81191">
    <property type="protein sequence ID" value="PNW81191"/>
    <property type="gene ID" value="CHLRE_07g346050v5"/>
</dbReference>
<dbReference type="KEGG" id="cre:CHLRE_07g346050v5"/>
<dbReference type="eggNOG" id="ENOG502QRIH">
    <property type="taxonomic scope" value="Eukaryota"/>
</dbReference>
<dbReference type="HOGENOM" id="CLU_048037_0_0_1"/>
<dbReference type="OMA" id="FRNDYNK"/>
<dbReference type="OrthoDB" id="524174at2759"/>
<dbReference type="BRENDA" id="1.14.13.81">
    <property type="organism ID" value="1318"/>
</dbReference>
<dbReference type="UniPathway" id="UPA00668"/>
<dbReference type="GO" id="GO:0009535">
    <property type="term" value="C:chloroplast thylakoid membrane"/>
    <property type="evidence" value="ECO:0007669"/>
    <property type="project" value="UniProtKB-SubCell"/>
</dbReference>
<dbReference type="GO" id="GO:0048529">
    <property type="term" value="F:magnesium-protoporphyrin IX monomethyl ester (oxidative) cyclase activity"/>
    <property type="evidence" value="ECO:0007669"/>
    <property type="project" value="UniProtKB-EC"/>
</dbReference>
<dbReference type="GO" id="GO:0046872">
    <property type="term" value="F:metal ion binding"/>
    <property type="evidence" value="ECO:0007669"/>
    <property type="project" value="UniProtKB-KW"/>
</dbReference>
<dbReference type="GO" id="GO:0015995">
    <property type="term" value="P:chlorophyll biosynthetic process"/>
    <property type="evidence" value="ECO:0007669"/>
    <property type="project" value="UniProtKB-UniPathway"/>
</dbReference>
<dbReference type="GO" id="GO:0015979">
    <property type="term" value="P:photosynthesis"/>
    <property type="evidence" value="ECO:0007669"/>
    <property type="project" value="UniProtKB-KW"/>
</dbReference>
<dbReference type="CDD" id="cd01047">
    <property type="entry name" value="ACSF"/>
    <property type="match status" value="1"/>
</dbReference>
<dbReference type="HAMAP" id="MF_01840">
    <property type="entry name" value="AcsF"/>
    <property type="match status" value="1"/>
</dbReference>
<dbReference type="InterPro" id="IPR008434">
    <property type="entry name" value="AcsF"/>
</dbReference>
<dbReference type="InterPro" id="IPR009078">
    <property type="entry name" value="Ferritin-like_SF"/>
</dbReference>
<dbReference type="InterPro" id="IPR003251">
    <property type="entry name" value="Rr_diiron-bd_dom"/>
</dbReference>
<dbReference type="NCBIfam" id="TIGR02029">
    <property type="entry name" value="AcsF"/>
    <property type="match status" value="1"/>
</dbReference>
<dbReference type="NCBIfam" id="NF010172">
    <property type="entry name" value="PRK13654.1"/>
    <property type="match status" value="1"/>
</dbReference>
<dbReference type="PANTHER" id="PTHR31053">
    <property type="entry name" value="MAGNESIUM-PROTOPORPHYRIN IX MONOMETHYL ESTER [OXIDATIVE] CYCLASE, CHLOROPLASTIC"/>
    <property type="match status" value="1"/>
</dbReference>
<dbReference type="PANTHER" id="PTHR31053:SF2">
    <property type="entry name" value="MAGNESIUM-PROTOPORPHYRIN IX MONOMETHYL ESTER [OXIDATIVE] CYCLASE, CHLOROPLASTIC"/>
    <property type="match status" value="1"/>
</dbReference>
<dbReference type="Pfam" id="PF02915">
    <property type="entry name" value="Rubrerythrin"/>
    <property type="match status" value="1"/>
</dbReference>
<dbReference type="SUPFAM" id="SSF47240">
    <property type="entry name" value="Ferritin-like"/>
    <property type="match status" value="1"/>
</dbReference>
<reference key="1">
    <citation type="journal article" date="2000" name="EMBO J.">
        <title>The Crd1 gene encodes a putative di-iron enzyme required for photosystem I accumulation in copper deficiency and hypoxia in Chlamydomonas reinhardtii.</title>
        <authorList>
            <person name="Moseley J.L."/>
            <person name="Quinn J."/>
            <person name="Eriksson M."/>
            <person name="Merchant S."/>
        </authorList>
    </citation>
    <scope>NUCLEOTIDE SEQUENCE [GENOMIC DNA]</scope>
    <scope>FUNCTION</scope>
    <scope>INDUCTION</scope>
</reference>
<reference key="2">
    <citation type="journal article" date="2002" name="EMBO J.">
        <title>Adaptation to Fe-deficiency requires remodeling of the photosynthetic apparatus.</title>
        <authorList>
            <person name="Moseley J.L."/>
            <person name="Allinger T."/>
            <person name="Herzog S."/>
            <person name="Hoerth P."/>
            <person name="Wehinger E."/>
            <person name="Merchant S."/>
            <person name="Hippler M."/>
        </authorList>
    </citation>
    <scope>FUNCTION</scope>
    <scope>SUBCELLULAR LOCATION</scope>
</reference>
<reference key="3">
    <citation type="journal article" date="2002" name="Plant Cell">
        <title>Reciprocal expression of two candidate di-iron enzymes affecting photosystem I and light-harvesting complex accumulation.</title>
        <authorList>
            <person name="Moseley J.L."/>
            <person name="Page M.D."/>
            <person name="Alder N.P."/>
            <person name="Eriksson M."/>
            <person name="Quinn J."/>
            <person name="Soto F."/>
            <person name="Theg S.M."/>
            <person name="Hippler M."/>
            <person name="Merchant S."/>
        </authorList>
    </citation>
    <scope>SUBCELLULAR LOCATION</scope>
    <scope>INDUCTION</scope>
</reference>
<reference key="4">
    <citation type="journal article" date="2002" name="Plant Physiol.">
        <title>Oxygen deficiency responsive gene expression in Chlamydomonas reinhardtii through a copper-sensing signal transduction pathway.</title>
        <authorList>
            <person name="Quinn J.M."/>
            <person name="Eriksson M."/>
            <person name="Moseley J.L."/>
            <person name="Merchant S."/>
        </authorList>
    </citation>
    <scope>INDUCTION</scope>
</reference>
<comment type="function">
    <text evidence="4 7">Catalyzes the formation of the isocyclic ring in chlorophyll biosynthesis under oxygen- and copper-deficient conditions. Mediates the cyclase reaction, which results in the formation of divinylprotochlorophyllide (Pchlide) characteristic of all chlorophylls from magnesium-protoporphyrin IX 13-monomethyl ester (MgPMME).</text>
</comment>
<comment type="catalytic activity">
    <reaction>
        <text>Mg-protoporphyrin IX 13-monomethyl ester + 3 NADPH + 3 O2 + 2 H(+) = 3,8-divinyl protochlorophyllide a + 3 NADP(+) + 5 H2O</text>
        <dbReference type="Rhea" id="RHEA:33235"/>
        <dbReference type="ChEBI" id="CHEBI:15377"/>
        <dbReference type="ChEBI" id="CHEBI:15378"/>
        <dbReference type="ChEBI" id="CHEBI:15379"/>
        <dbReference type="ChEBI" id="CHEBI:57783"/>
        <dbReference type="ChEBI" id="CHEBI:58349"/>
        <dbReference type="ChEBI" id="CHEBI:58632"/>
        <dbReference type="ChEBI" id="CHEBI:60491"/>
        <dbReference type="EC" id="1.14.13.81"/>
    </reaction>
</comment>
<comment type="cofactor">
    <cofactor evidence="1">
        <name>Fe cation</name>
        <dbReference type="ChEBI" id="CHEBI:24875"/>
    </cofactor>
</comment>
<comment type="pathway">
    <text>Porphyrin-containing compound metabolism; chlorophyll biosynthesis.</text>
</comment>
<comment type="subcellular location">
    <subcellularLocation>
        <location evidence="6 7">Plastid</location>
        <location evidence="6 7">Chloroplast thylakoid membrane</location>
    </subcellularLocation>
</comment>
<comment type="induction">
    <text evidence="4 5 6">Induced in absence of copper and oxygen. Regulated by CRR1 protein, which activates its transcription in absence of copper.</text>
</comment>
<comment type="similarity">
    <text evidence="8">Belongs to the AcsF family.</text>
</comment>
<sequence length="407" mass="47212">MQTTLKQQRASGRVSARQPFRSAAVARPRRSTVRVQASAAPLNDGLGFETMRDGIKVAAKETLLTPRFYTTDFDEMEQLFSKEINPNLDMEELNACLNEFRNDYNKVHFVRNETFKAAADKVTGETRRIFIEFLERSCTAEFSGFLLYKELARRMKASSPEVAEMFLLMSRDEARHAGFLNKALSDFNLALDLGFLTKNRTYTYFKPKFIIYATFLSEKIGYWRYITIYRHLQRNPDNQFYPLFEYFENWCQDENRHGDFLAACLKAKPELLNTFEAKLWSKFFCLSVYITMYLNDHQRTKFYESLGLNTRQFNQHVIIETNRATERLFPVVPDVEDPRFFEILNKMVDVNAKLVELSASSSPLAGLQKLPLLERMASYCLQLLFFKEKDVGSVDIAGSGASRNLAY</sequence>
<proteinExistence type="evidence at transcript level"/>
<accession>Q9LD46</accession>